<comment type="domain">
    <text>Contains a DNA-binding region joined by a short variable segment to a region similar to E.coli korA and trbA.</text>
</comment>
<gene>
    <name type="primary">klcB</name>
</gene>
<protein>
    <recommendedName>
        <fullName>Protein KlcB</fullName>
    </recommendedName>
</protein>
<sequence>MAKRTKQPAQTGQDWSAPAAELLAELPADRDGLLAAAVAAVVEIDAAVMRGDGAAAELAGDRYEAIIWKLNGGTNFGCMADDEAAGRVIERHCAAVPGDVPLWGQRGQFLAVAGDVRALVEYEAGYGGPLNAHFQFHAVDLDRPFISATGYRSHFDTARGCMTVDEVARGILTAMLAEKKRPVLIEANYRDRLADAPLPDWLAGLVPPARREPATVTIPPGFVLVDVVLPAHKAFIARRWAAEAAGKVKAARAARSNAKGKAGGRERDPASAETAMRCSTAKADDCKAEAGPVSPEATMPGAGEASCSTARNGDAGPADLVEFTPAPGQRCEIVSVHHPVFAKEIGKRVIIVKVHPDTRQVWAHDDRPVTYKTNRAGRRVVDSDPSCIQSIYGFDQLRLIT</sequence>
<name>KLCB1_ECOLX</name>
<proteinExistence type="predicted"/>
<feature type="chain" id="PRO_0000068377" description="Protein KlcB">
    <location>
        <begin position="1"/>
        <end position="401"/>
    </location>
</feature>
<feature type="region of interest" description="Disordered" evidence="1">
    <location>
        <begin position="253"/>
        <end position="311"/>
    </location>
</feature>
<organism>
    <name type="scientific">Escherichia coli</name>
    <dbReference type="NCBI Taxonomy" id="562"/>
    <lineage>
        <taxon>Bacteria</taxon>
        <taxon>Pseudomonadati</taxon>
        <taxon>Pseudomonadota</taxon>
        <taxon>Gammaproteobacteria</taxon>
        <taxon>Enterobacterales</taxon>
        <taxon>Enterobacteriaceae</taxon>
        <taxon>Escherichia</taxon>
    </lineage>
</organism>
<keyword id="KW-0238">DNA-binding</keyword>
<keyword id="KW-0614">Plasmid</keyword>
<keyword id="KW-0804">Transcription</keyword>
<keyword id="KW-0805">Transcription regulation</keyword>
<accession>P52604</accession>
<evidence type="ECO:0000256" key="1">
    <source>
        <dbReference type="SAM" id="MobiDB-lite"/>
    </source>
</evidence>
<dbReference type="EMBL" id="U67194">
    <property type="protein sequence ID" value="AAC64429.2"/>
    <property type="molecule type" value="Genomic_DNA"/>
</dbReference>
<dbReference type="RefSeq" id="WP_010890116.1">
    <property type="nucleotide sequence ID" value="NZ_JARZAT010000004.1"/>
</dbReference>
<dbReference type="SMR" id="P52604"/>
<dbReference type="GO" id="GO:0003677">
    <property type="term" value="F:DNA binding"/>
    <property type="evidence" value="ECO:0007669"/>
    <property type="project" value="UniProtKB-KW"/>
</dbReference>
<geneLocation type="plasmid">
    <name>IncP-beta R751</name>
</geneLocation>
<reference key="1">
    <citation type="journal article" date="1995" name="Microbiology">
        <title>Evolution of the korA-oriV segment of promiscuous IncP plasmids.</title>
        <authorList>
            <person name="Thomas C.M."/>
            <person name="Smith C.A."/>
            <person name="Ibbotson J.P."/>
            <person name="Johnston L."/>
            <person name="Wang N."/>
        </authorList>
    </citation>
    <scope>NUCLEOTIDE SEQUENCE [GENOMIC DNA]</scope>
</reference>
<reference key="2">
    <citation type="submission" date="2001-07" db="EMBL/GenBank/DDBJ databases">
        <authorList>
            <person name="Haines A.S."/>
            <person name="Thomas C.M."/>
        </authorList>
    </citation>
    <scope>SEQUENCE REVISION</scope>
</reference>